<protein>
    <recommendedName>
        <fullName>Helicase SWR1</fullName>
        <ecNumber>3.6.4.12</ecNumber>
    </recommendedName>
</protein>
<comment type="function">
    <text evidence="1">Catalytic component of the SWR1 complex which mediates the ATP-dependent exchange of histone H2A for the H2A variant HZT1 leading to transcriptional regulation of selected genes by chromatin remodeling.</text>
</comment>
<comment type="catalytic activity">
    <reaction>
        <text>ATP + H2O = ADP + phosphate + H(+)</text>
        <dbReference type="Rhea" id="RHEA:13065"/>
        <dbReference type="ChEBI" id="CHEBI:15377"/>
        <dbReference type="ChEBI" id="CHEBI:15378"/>
        <dbReference type="ChEBI" id="CHEBI:30616"/>
        <dbReference type="ChEBI" id="CHEBI:43474"/>
        <dbReference type="ChEBI" id="CHEBI:456216"/>
        <dbReference type="EC" id="3.6.4.12"/>
    </reaction>
</comment>
<comment type="subunit">
    <text evidence="1">Component of the SWR1 chromatin-remodeling complex.</text>
</comment>
<comment type="subcellular location">
    <subcellularLocation>
        <location evidence="4">Nucleus</location>
    </subcellularLocation>
</comment>
<comment type="similarity">
    <text evidence="6">Belongs to the SNF2/RAD54 helicase family. SWR1 subfamily.</text>
</comment>
<evidence type="ECO:0000250" key="1"/>
<evidence type="ECO:0000255" key="2">
    <source>
        <dbReference type="PROSITE-ProRule" id="PRU00541"/>
    </source>
</evidence>
<evidence type="ECO:0000255" key="3">
    <source>
        <dbReference type="PROSITE-ProRule" id="PRU00542"/>
    </source>
</evidence>
<evidence type="ECO:0000255" key="4">
    <source>
        <dbReference type="PROSITE-ProRule" id="PRU00549"/>
    </source>
</evidence>
<evidence type="ECO:0000256" key="5">
    <source>
        <dbReference type="SAM" id="MobiDB-lite"/>
    </source>
</evidence>
<evidence type="ECO:0000305" key="6"/>
<name>SWR1_GIBZE</name>
<proteinExistence type="inferred from homology"/>
<dbReference type="EC" id="3.6.4.12"/>
<dbReference type="EMBL" id="DS231665">
    <property type="protein sequence ID" value="ESU11758.1"/>
    <property type="molecule type" value="Genomic_DNA"/>
</dbReference>
<dbReference type="EMBL" id="HG970334">
    <property type="protein sequence ID" value="CEF87066.1"/>
    <property type="molecule type" value="Genomic_DNA"/>
</dbReference>
<dbReference type="RefSeq" id="XP_011324334.1">
    <property type="nucleotide sequence ID" value="XM_011326032.1"/>
</dbReference>
<dbReference type="SMR" id="Q4IAK7"/>
<dbReference type="FunCoup" id="Q4IAK7">
    <property type="interactions" value="203"/>
</dbReference>
<dbReference type="STRING" id="229533.Q4IAK7"/>
<dbReference type="GeneID" id="23552917"/>
<dbReference type="KEGG" id="fgr:FGSG_05751"/>
<dbReference type="VEuPathDB" id="FungiDB:FGRAMPH1_01G18675"/>
<dbReference type="eggNOG" id="KOG0391">
    <property type="taxonomic scope" value="Eukaryota"/>
</dbReference>
<dbReference type="HOGENOM" id="CLU_000315_24_2_1"/>
<dbReference type="InParanoid" id="Q4IAK7"/>
<dbReference type="OrthoDB" id="133974at110618"/>
<dbReference type="Proteomes" id="UP000070720">
    <property type="component" value="Chromosome 3"/>
</dbReference>
<dbReference type="GO" id="GO:0000812">
    <property type="term" value="C:Swr1 complex"/>
    <property type="evidence" value="ECO:0007669"/>
    <property type="project" value="TreeGrafter"/>
</dbReference>
<dbReference type="GO" id="GO:0005524">
    <property type="term" value="F:ATP binding"/>
    <property type="evidence" value="ECO:0007669"/>
    <property type="project" value="UniProtKB-KW"/>
</dbReference>
<dbReference type="GO" id="GO:0016887">
    <property type="term" value="F:ATP hydrolysis activity"/>
    <property type="evidence" value="ECO:0007669"/>
    <property type="project" value="TreeGrafter"/>
</dbReference>
<dbReference type="GO" id="GO:0003677">
    <property type="term" value="F:DNA binding"/>
    <property type="evidence" value="ECO:0007669"/>
    <property type="project" value="UniProtKB-KW"/>
</dbReference>
<dbReference type="GO" id="GO:0004386">
    <property type="term" value="F:helicase activity"/>
    <property type="evidence" value="ECO:0007669"/>
    <property type="project" value="UniProtKB-KW"/>
</dbReference>
<dbReference type="GO" id="GO:0042393">
    <property type="term" value="F:histone binding"/>
    <property type="evidence" value="ECO:0007669"/>
    <property type="project" value="TreeGrafter"/>
</dbReference>
<dbReference type="GO" id="GO:0006338">
    <property type="term" value="P:chromatin remodeling"/>
    <property type="evidence" value="ECO:0007669"/>
    <property type="project" value="TreeGrafter"/>
</dbReference>
<dbReference type="CDD" id="cd18003">
    <property type="entry name" value="DEXQc_SRCAP"/>
    <property type="match status" value="1"/>
</dbReference>
<dbReference type="CDD" id="cd18793">
    <property type="entry name" value="SF2_C_SNF"/>
    <property type="match status" value="1"/>
</dbReference>
<dbReference type="FunFam" id="3.40.50.10810:FF:000005">
    <property type="entry name" value="Photoperiod-independent early flowering 1"/>
    <property type="match status" value="1"/>
</dbReference>
<dbReference type="FunFam" id="3.40.50.300:FF:000655">
    <property type="entry name" value="Protein PHOTOPERIOD-INDEPENDENT EARLY FLOWERING 1"/>
    <property type="match status" value="1"/>
</dbReference>
<dbReference type="Gene3D" id="3.40.50.300">
    <property type="entry name" value="P-loop containing nucleotide triphosphate hydrolases"/>
    <property type="match status" value="1"/>
</dbReference>
<dbReference type="Gene3D" id="1.20.120.850">
    <property type="entry name" value="SWI2/SNF2 ATPases, N-terminal domain"/>
    <property type="match status" value="1"/>
</dbReference>
<dbReference type="Gene3D" id="3.40.50.10810">
    <property type="entry name" value="Tandem AAA-ATPase domain"/>
    <property type="match status" value="1"/>
</dbReference>
<dbReference type="InterPro" id="IPR002464">
    <property type="entry name" value="DNA/RNA_helicase_DEAH_CS"/>
</dbReference>
<dbReference type="InterPro" id="IPR014001">
    <property type="entry name" value="Helicase_ATP-bd"/>
</dbReference>
<dbReference type="InterPro" id="IPR001650">
    <property type="entry name" value="Helicase_C-like"/>
</dbReference>
<dbReference type="InterPro" id="IPR014012">
    <property type="entry name" value="HSA_dom"/>
</dbReference>
<dbReference type="InterPro" id="IPR050520">
    <property type="entry name" value="INO80/SWR1_helicase"/>
</dbReference>
<dbReference type="InterPro" id="IPR027417">
    <property type="entry name" value="P-loop_NTPase"/>
</dbReference>
<dbReference type="InterPro" id="IPR038718">
    <property type="entry name" value="SNF2-like_sf"/>
</dbReference>
<dbReference type="InterPro" id="IPR049730">
    <property type="entry name" value="SNF2/RAD54-like_C"/>
</dbReference>
<dbReference type="InterPro" id="IPR000330">
    <property type="entry name" value="SNF2_N"/>
</dbReference>
<dbReference type="PANTHER" id="PTHR45685:SF1">
    <property type="entry name" value="HELICASE SRCAP"/>
    <property type="match status" value="1"/>
</dbReference>
<dbReference type="PANTHER" id="PTHR45685">
    <property type="entry name" value="HELICASE SRCAP-RELATED"/>
    <property type="match status" value="1"/>
</dbReference>
<dbReference type="Pfam" id="PF00271">
    <property type="entry name" value="Helicase_C"/>
    <property type="match status" value="1"/>
</dbReference>
<dbReference type="Pfam" id="PF00176">
    <property type="entry name" value="SNF2-rel_dom"/>
    <property type="match status" value="1"/>
</dbReference>
<dbReference type="SMART" id="SM00487">
    <property type="entry name" value="DEXDc"/>
    <property type="match status" value="1"/>
</dbReference>
<dbReference type="SMART" id="SM00490">
    <property type="entry name" value="HELICc"/>
    <property type="match status" value="1"/>
</dbReference>
<dbReference type="SUPFAM" id="SSF52540">
    <property type="entry name" value="P-loop containing nucleoside triphosphate hydrolases"/>
    <property type="match status" value="2"/>
</dbReference>
<dbReference type="PROSITE" id="PS00690">
    <property type="entry name" value="DEAH_ATP_HELICASE"/>
    <property type="match status" value="1"/>
</dbReference>
<dbReference type="PROSITE" id="PS51192">
    <property type="entry name" value="HELICASE_ATP_BIND_1"/>
    <property type="match status" value="1"/>
</dbReference>
<dbReference type="PROSITE" id="PS51194">
    <property type="entry name" value="HELICASE_CTER"/>
    <property type="match status" value="1"/>
</dbReference>
<dbReference type="PROSITE" id="PS51204">
    <property type="entry name" value="HSA"/>
    <property type="match status" value="1"/>
</dbReference>
<gene>
    <name type="primary">SWR1</name>
    <name type="ORF">FGRRES_05751</name>
    <name type="ORF">FGSG_05751</name>
</gene>
<accession>Q4IAK7</accession>
<accession>A0A0E0SKV3</accession>
<accession>V6RAW2</accession>
<reference key="1">
    <citation type="journal article" date="2007" name="Science">
        <title>The Fusarium graminearum genome reveals a link between localized polymorphism and pathogen specialization.</title>
        <authorList>
            <person name="Cuomo C.A."/>
            <person name="Gueldener U."/>
            <person name="Xu J.-R."/>
            <person name="Trail F."/>
            <person name="Turgeon B.G."/>
            <person name="Di Pietro A."/>
            <person name="Walton J.D."/>
            <person name="Ma L.-J."/>
            <person name="Baker S.E."/>
            <person name="Rep M."/>
            <person name="Adam G."/>
            <person name="Antoniw J."/>
            <person name="Baldwin T."/>
            <person name="Calvo S.E."/>
            <person name="Chang Y.-L."/>
            <person name="DeCaprio D."/>
            <person name="Gale L.R."/>
            <person name="Gnerre S."/>
            <person name="Goswami R.S."/>
            <person name="Hammond-Kosack K."/>
            <person name="Harris L.J."/>
            <person name="Hilburn K."/>
            <person name="Kennell J.C."/>
            <person name="Kroken S."/>
            <person name="Magnuson J.K."/>
            <person name="Mannhaupt G."/>
            <person name="Mauceli E.W."/>
            <person name="Mewes H.-W."/>
            <person name="Mitterbauer R."/>
            <person name="Muehlbauer G."/>
            <person name="Muensterkoetter M."/>
            <person name="Nelson D."/>
            <person name="O'Donnell K."/>
            <person name="Ouellet T."/>
            <person name="Qi W."/>
            <person name="Quesneville H."/>
            <person name="Roncero M.I.G."/>
            <person name="Seong K.-Y."/>
            <person name="Tetko I.V."/>
            <person name="Urban M."/>
            <person name="Waalwijk C."/>
            <person name="Ward T.J."/>
            <person name="Yao J."/>
            <person name="Birren B.W."/>
            <person name="Kistler H.C."/>
        </authorList>
    </citation>
    <scope>NUCLEOTIDE SEQUENCE [LARGE SCALE GENOMIC DNA]</scope>
    <source>
        <strain>ATCC MYA-4620 / CBS 123657 / FGSC 9075 / NRRL 31084 / PH-1</strain>
    </source>
</reference>
<reference key="2">
    <citation type="journal article" date="2010" name="Nature">
        <title>Comparative genomics reveals mobile pathogenicity chromosomes in Fusarium.</title>
        <authorList>
            <person name="Ma L.-J."/>
            <person name="van der Does H.C."/>
            <person name="Borkovich K.A."/>
            <person name="Coleman J.J."/>
            <person name="Daboussi M.-J."/>
            <person name="Di Pietro A."/>
            <person name="Dufresne M."/>
            <person name="Freitag M."/>
            <person name="Grabherr M."/>
            <person name="Henrissat B."/>
            <person name="Houterman P.M."/>
            <person name="Kang S."/>
            <person name="Shim W.-B."/>
            <person name="Woloshuk C."/>
            <person name="Xie X."/>
            <person name="Xu J.-R."/>
            <person name="Antoniw J."/>
            <person name="Baker S.E."/>
            <person name="Bluhm B.H."/>
            <person name="Breakspear A."/>
            <person name="Brown D.W."/>
            <person name="Butchko R.A.E."/>
            <person name="Chapman S."/>
            <person name="Coulson R."/>
            <person name="Coutinho P.M."/>
            <person name="Danchin E.G.J."/>
            <person name="Diener A."/>
            <person name="Gale L.R."/>
            <person name="Gardiner D.M."/>
            <person name="Goff S."/>
            <person name="Hammond-Kosack K.E."/>
            <person name="Hilburn K."/>
            <person name="Hua-Van A."/>
            <person name="Jonkers W."/>
            <person name="Kazan K."/>
            <person name="Kodira C.D."/>
            <person name="Koehrsen M."/>
            <person name="Kumar L."/>
            <person name="Lee Y.-H."/>
            <person name="Li L."/>
            <person name="Manners J.M."/>
            <person name="Miranda-Saavedra D."/>
            <person name="Mukherjee M."/>
            <person name="Park G."/>
            <person name="Park J."/>
            <person name="Park S.-Y."/>
            <person name="Proctor R.H."/>
            <person name="Regev A."/>
            <person name="Ruiz-Roldan M.C."/>
            <person name="Sain D."/>
            <person name="Sakthikumar S."/>
            <person name="Sykes S."/>
            <person name="Schwartz D.C."/>
            <person name="Turgeon B.G."/>
            <person name="Wapinski I."/>
            <person name="Yoder O."/>
            <person name="Young S."/>
            <person name="Zeng Q."/>
            <person name="Zhou S."/>
            <person name="Galagan J."/>
            <person name="Cuomo C.A."/>
            <person name="Kistler H.C."/>
            <person name="Rep M."/>
        </authorList>
    </citation>
    <scope>GENOME REANNOTATION</scope>
    <source>
        <strain>ATCC MYA-4620 / CBS 123657 / FGSC 9075 / NRRL 31084 / PH-1</strain>
    </source>
</reference>
<reference key="3">
    <citation type="journal article" date="2015" name="BMC Genomics">
        <title>The completed genome sequence of the pathogenic ascomycete fungus Fusarium graminearum.</title>
        <authorList>
            <person name="King R."/>
            <person name="Urban M."/>
            <person name="Hammond-Kosack M.C.U."/>
            <person name="Hassani-Pak K."/>
            <person name="Hammond-Kosack K.E."/>
        </authorList>
    </citation>
    <scope>NUCLEOTIDE SEQUENCE [LARGE SCALE GENOMIC DNA]</scope>
    <source>
        <strain>ATCC MYA-4620 / CBS 123657 / FGSC 9075 / NRRL 31084 / PH-1</strain>
    </source>
</reference>
<sequence length="1691" mass="190422">MPETASTANVLPKSDPDAIKTEQDALEGYENGGDALQGTMDGHVETNGDAPATENHHEPNHIHDDERPAKRRRTRDSTPPQNTPKKMKPVSPPWKKISADGPTSYTENGRRKSGRINTLLPEPSPLSKSRTSKRSTGANSNTKTEIHLTNGNSRKMPNGSHKASPATKAPSKQAPASTPKSASKKPTETRTSSRSTRRRSPTPPPPPKNSTRSRRSARFSDAVIKDEAVQDSRTATSNSTNRSPRIKLRVGRSGHIPLVHPGQVRKRPKIGTSFEDFWTRAGDIPVEEGGLQASEDGPQYTDELAERDARVILRVEKEVEDGGMLSQGRCSIFLPEPAEEPPRQWARQDHMVKAMTNFRKLMLAEQQRHRIAAKKVAEACRDEWLRRQPKSEEEIEAEQRAVWISRYRIVAKTLFGTWENVRTEVNRRRLAEWEQEEQRRVKAALNEAVNLSEQKLQARQAGLDSEQLSEEDGFDDLSDDMSMADDDELGLASGEDEDDEDGDADSDIMSSDEEEGDEEDQKDIGDENLTQEQLRAKYAHIPELEKPSTETPVTEPTPKDTDAVDTAQATATENAETSDESVDMDDDMGSTDMDSDEEDEEEESEEESDEDAGGLLGLLFGKSELKKMNSEAVAETPADSKEDSEMPDVEAVSDGEGAEENEMSLIQMPDPEPHESGALEKSTKEAVEEKEQIPAAMQDVAAGQDGLSNTDNNVQEPASQDNDVAMTGNDPEEPSALTFEKPHSPATEPATNPPSRVHSTSPPATSETKPSELDTASTEEMAVDKHDTSRSPSPQPSNHKIEVPFLLRGTLREYQRDGLDWLAGLYANSTNGILADEMGLGKTIQTIALLAHLACTHEVWGPHLVIVPTSVMLNWEMEFKKWCPGFKILAYYGSQEERKRKRQGWNNDDIWNVCITSYQLVLQDQQVFKRRRWHYMILDEAHNIKNFKSQRWQTLLGFNTQARLLLTGTPLQNNLTELWSLLFFLMPAENGVGGFADLQEFHDWFAKPESQILESGREQMDDEARAIISKLHKVLRPYLLRRLKADVEKQMPAKYEHVEFCRLSKRQRELYDGFLSRTDTKETLNSGNYLSIINCLMQLRKVCNHPDLFVDRPIMTSFRMQKSVVSDFEVTEQRVQRLLHDPSPMKDVSLGFLNLMPTQCESLSTTQAERISQLSSHRKLMELREAQKIRAQSAHANLDPSTVASNIGYLESGARWGRYEELQHCVYLNALRRQKKPIYGKNLIELLTIGTDKRPYKPRPKIPRQVLAWFEEESTLVQSMIPTVNQRADSFKTIIEKFSCVTPAVVTRDMEQFVLGRKGIEAFSDEDLKLSAPVRWAPFLPKEAPPDPWHEGRMRLSIQFPDKRLLQYDCGKLQILDKLLRKLQAGGHRALIFTQMTKVLDILEQFLNIHGHKYLRLDGATKVEQRQILTDRFNNDPRILCFILSTRSGGLGINLTGADTVIFYDQDWNPAMDKQCQDRCHRIGQTRDVHIYRLVSEHTIEANILRKASQKQMLDDVVIQEGEFTTDYFNKLSVRDVLSEKLDSKSEGLDAADAALDRVLGGPDTNNDQRRVGRALEQAEDREDVAAARVAEKEIQADDADFTEKPSNNASGTSTARQGTPAGKSVLDGGLDDIDAPHVEEVLEYNAWGDKMHTIDDYMLGIMAEQLKDTKLELPKDKKKGKKKGKDTRKR</sequence>
<feature type="chain" id="PRO_0000074369" description="Helicase SWR1">
    <location>
        <begin position="1"/>
        <end position="1691"/>
    </location>
</feature>
<feature type="domain" description="HSA" evidence="4">
    <location>
        <begin position="335"/>
        <end position="409"/>
    </location>
</feature>
<feature type="domain" description="Helicase ATP-binding" evidence="2">
    <location>
        <begin position="823"/>
        <end position="988"/>
    </location>
</feature>
<feature type="domain" description="Helicase C-terminal" evidence="3">
    <location>
        <begin position="1375"/>
        <end position="1525"/>
    </location>
</feature>
<feature type="region of interest" description="Disordered" evidence="5">
    <location>
        <begin position="1"/>
        <end position="244"/>
    </location>
</feature>
<feature type="region of interest" description="Disordered" evidence="5">
    <location>
        <begin position="457"/>
        <end position="615"/>
    </location>
</feature>
<feature type="region of interest" description="Disordered" evidence="5">
    <location>
        <begin position="628"/>
        <end position="801"/>
    </location>
</feature>
<feature type="region of interest" description="Disordered" evidence="5">
    <location>
        <begin position="1594"/>
        <end position="1632"/>
    </location>
</feature>
<feature type="region of interest" description="Disordered" evidence="5">
    <location>
        <begin position="1669"/>
        <end position="1691"/>
    </location>
</feature>
<feature type="short sequence motif" description="DEAH box">
    <location>
        <begin position="939"/>
        <end position="942"/>
    </location>
</feature>
<feature type="compositionally biased region" description="Basic and acidic residues" evidence="5">
    <location>
        <begin position="14"/>
        <end position="23"/>
    </location>
</feature>
<feature type="compositionally biased region" description="Basic and acidic residues" evidence="5">
    <location>
        <begin position="54"/>
        <end position="68"/>
    </location>
</feature>
<feature type="compositionally biased region" description="Polar residues" evidence="5">
    <location>
        <begin position="126"/>
        <end position="155"/>
    </location>
</feature>
<feature type="compositionally biased region" description="Low complexity" evidence="5">
    <location>
        <begin position="232"/>
        <end position="243"/>
    </location>
</feature>
<feature type="compositionally biased region" description="Acidic residues" evidence="5">
    <location>
        <begin position="467"/>
        <end position="521"/>
    </location>
</feature>
<feature type="compositionally biased region" description="Low complexity" evidence="5">
    <location>
        <begin position="564"/>
        <end position="575"/>
    </location>
</feature>
<feature type="compositionally biased region" description="Acidic residues" evidence="5">
    <location>
        <begin position="576"/>
        <end position="612"/>
    </location>
</feature>
<feature type="compositionally biased region" description="Acidic residues" evidence="5">
    <location>
        <begin position="645"/>
        <end position="662"/>
    </location>
</feature>
<feature type="compositionally biased region" description="Basic and acidic residues" evidence="5">
    <location>
        <begin position="671"/>
        <end position="692"/>
    </location>
</feature>
<feature type="compositionally biased region" description="Polar residues" evidence="5">
    <location>
        <begin position="706"/>
        <end position="722"/>
    </location>
</feature>
<feature type="compositionally biased region" description="Polar residues" evidence="5">
    <location>
        <begin position="749"/>
        <end position="778"/>
    </location>
</feature>
<feature type="compositionally biased region" description="Polar residues" evidence="5">
    <location>
        <begin position="1605"/>
        <end position="1618"/>
    </location>
</feature>
<feature type="compositionally biased region" description="Basic residues" evidence="5">
    <location>
        <begin position="1677"/>
        <end position="1691"/>
    </location>
</feature>
<feature type="binding site" evidence="2">
    <location>
        <begin position="836"/>
        <end position="843"/>
    </location>
    <ligand>
        <name>ATP</name>
        <dbReference type="ChEBI" id="CHEBI:30616"/>
    </ligand>
</feature>
<keyword id="KW-0010">Activator</keyword>
<keyword id="KW-0067">ATP-binding</keyword>
<keyword id="KW-0156">Chromatin regulator</keyword>
<keyword id="KW-0238">DNA-binding</keyword>
<keyword id="KW-0347">Helicase</keyword>
<keyword id="KW-0378">Hydrolase</keyword>
<keyword id="KW-0547">Nucleotide-binding</keyword>
<keyword id="KW-0539">Nucleus</keyword>
<keyword id="KW-1185">Reference proteome</keyword>
<keyword id="KW-0804">Transcription</keyword>
<keyword id="KW-0805">Transcription regulation</keyword>
<organism>
    <name type="scientific">Gibberella zeae (strain ATCC MYA-4620 / CBS 123657 / FGSC 9075 / NRRL 31084 / PH-1)</name>
    <name type="common">Wheat head blight fungus</name>
    <name type="synonym">Fusarium graminearum</name>
    <dbReference type="NCBI Taxonomy" id="229533"/>
    <lineage>
        <taxon>Eukaryota</taxon>
        <taxon>Fungi</taxon>
        <taxon>Dikarya</taxon>
        <taxon>Ascomycota</taxon>
        <taxon>Pezizomycotina</taxon>
        <taxon>Sordariomycetes</taxon>
        <taxon>Hypocreomycetidae</taxon>
        <taxon>Hypocreales</taxon>
        <taxon>Nectriaceae</taxon>
        <taxon>Fusarium</taxon>
    </lineage>
</organism>